<sequence>MKGEAGHMLHNEKSKQEGYIWGSMRRTAFILGSGLLSFVAFWNSVTWHLQRFWGASGYFWQAQWERLLTTFEGKEWILFFIGAIQVPCLFFWSFNGLLLVVDTTGKPNFISRYRIQVGKNEPVDPVKLRQSIRTVLFNQCMVSFPMVVFLYPFLKWWGDPCRRELPTFHWFLLELAIFTLIEEVLFYYSHRLLHHPTFYKKIHKKHHEWTAPIGVISLYAHPIEHVVSNMLPAIVGPLVMGSHLSSITMWFSLALIITTISHCGYHLPFLPSPEFHDYHHLKFNQCYGVLGVLDHLHGTDTMFKQTKAYEKHVLLLGFTPLSESIPDSPKRMQ</sequence>
<organism>
    <name type="scientific">Macaca fascicularis</name>
    <name type="common">Crab-eating macaque</name>
    <name type="synonym">Cynomolgus monkey</name>
    <dbReference type="NCBI Taxonomy" id="9541"/>
    <lineage>
        <taxon>Eukaryota</taxon>
        <taxon>Metazoa</taxon>
        <taxon>Chordata</taxon>
        <taxon>Craniata</taxon>
        <taxon>Vertebrata</taxon>
        <taxon>Euteleostomi</taxon>
        <taxon>Mammalia</taxon>
        <taxon>Eutheria</taxon>
        <taxon>Euarchontoglires</taxon>
        <taxon>Primates</taxon>
        <taxon>Haplorrhini</taxon>
        <taxon>Catarrhini</taxon>
        <taxon>Cercopithecidae</taxon>
        <taxon>Cercopithecinae</taxon>
        <taxon>Macaca</taxon>
    </lineage>
</organism>
<evidence type="ECO:0000250" key="1">
    <source>
        <dbReference type="UniProtKB" id="Q96IV6"/>
    </source>
</evidence>
<evidence type="ECO:0000255" key="2"/>
<evidence type="ECO:0000305" key="3"/>
<proteinExistence type="evidence at transcript level"/>
<dbReference type="EMBL" id="AB052147">
    <property type="protein sequence ID" value="BAB19002.1"/>
    <property type="molecule type" value="mRNA"/>
</dbReference>
<dbReference type="EMBL" id="AB056418">
    <property type="protein sequence ID" value="BAB33076.1"/>
    <property type="molecule type" value="mRNA"/>
</dbReference>
<dbReference type="RefSeq" id="NP_001274618.1">
    <property type="nucleotide sequence ID" value="NM_001287689.1"/>
</dbReference>
<dbReference type="RefSeq" id="XP_005558419.1">
    <property type="nucleotide sequence ID" value="XM_005558362.2"/>
</dbReference>
<dbReference type="RefSeq" id="XP_005558420.1">
    <property type="nucleotide sequence ID" value="XM_005558363.2"/>
</dbReference>
<dbReference type="STRING" id="9541.ENSMFAP00000016283"/>
<dbReference type="GeneID" id="102134726"/>
<dbReference type="KEGG" id="mcf:102134726"/>
<dbReference type="CTD" id="10826"/>
<dbReference type="eggNOG" id="KOG0873">
    <property type="taxonomic scope" value="Eukaryota"/>
</dbReference>
<dbReference type="OrthoDB" id="321at314294"/>
<dbReference type="Proteomes" id="UP000233100">
    <property type="component" value="Unplaced"/>
</dbReference>
<dbReference type="GO" id="GO:0005737">
    <property type="term" value="C:cytoplasm"/>
    <property type="evidence" value="ECO:0000250"/>
    <property type="project" value="UniProtKB"/>
</dbReference>
<dbReference type="GO" id="GO:0016020">
    <property type="term" value="C:membrane"/>
    <property type="evidence" value="ECO:0007669"/>
    <property type="project" value="UniProtKB-SubCell"/>
</dbReference>
<dbReference type="GO" id="GO:0005506">
    <property type="term" value="F:iron ion binding"/>
    <property type="evidence" value="ECO:0007669"/>
    <property type="project" value="InterPro"/>
</dbReference>
<dbReference type="GO" id="GO:0016491">
    <property type="term" value="F:oxidoreductase activity"/>
    <property type="evidence" value="ECO:0007669"/>
    <property type="project" value="InterPro"/>
</dbReference>
<dbReference type="GO" id="GO:0008610">
    <property type="term" value="P:lipid biosynthetic process"/>
    <property type="evidence" value="ECO:0007669"/>
    <property type="project" value="InterPro"/>
</dbReference>
<dbReference type="GO" id="GO:0045654">
    <property type="term" value="P:positive regulation of megakaryocyte differentiation"/>
    <property type="evidence" value="ECO:0000250"/>
    <property type="project" value="UniProtKB"/>
</dbReference>
<dbReference type="GO" id="GO:0001934">
    <property type="term" value="P:positive regulation of protein phosphorylation"/>
    <property type="evidence" value="ECO:0000250"/>
    <property type="project" value="UniProtKB"/>
</dbReference>
<dbReference type="InterPro" id="IPR006694">
    <property type="entry name" value="Fatty_acid_hydroxylase"/>
</dbReference>
<dbReference type="InterPro" id="IPR050307">
    <property type="entry name" value="Sterol_Desaturase_Related"/>
</dbReference>
<dbReference type="PANTHER" id="PTHR11863">
    <property type="entry name" value="STEROL DESATURASE"/>
    <property type="match status" value="1"/>
</dbReference>
<dbReference type="Pfam" id="PF04116">
    <property type="entry name" value="FA_hydroxylase"/>
    <property type="match status" value="1"/>
</dbReference>
<reference key="1">
    <citation type="submission" date="2000-12" db="EMBL/GenBank/DDBJ databases">
        <title>Isolation of full-length cDNA clones from macaque brain cDNA libraries.</title>
        <authorList>
            <person name="Osada N."/>
            <person name="Hida M."/>
            <person name="Kusuda J."/>
            <person name="Tanuma R."/>
            <person name="Iseki K."/>
            <person name="Hirai M."/>
            <person name="Terao K."/>
            <person name="Suzuki Y."/>
            <person name="Sugano S."/>
            <person name="Hashimoto K."/>
        </authorList>
    </citation>
    <scope>NUCLEOTIDE SEQUENCE [LARGE SCALE MRNA]</scope>
    <source>
        <tissue>Brain cortex</tissue>
        <tissue>Frontal cortex</tissue>
    </source>
</reference>
<accession>Q9GKT2</accession>
<accession>Q9BGQ4</accession>
<feature type="chain" id="PRO_0000249849" description="Fatty acid hydroxylase domain-containing protein 2">
    <location>
        <begin position="1"/>
        <end position="333"/>
    </location>
</feature>
<feature type="transmembrane region" description="Helical" evidence="2">
    <location>
        <begin position="29"/>
        <end position="49"/>
    </location>
</feature>
<feature type="transmembrane region" description="Helical" evidence="2">
    <location>
        <begin position="77"/>
        <end position="97"/>
    </location>
</feature>
<feature type="transmembrane region" description="Helical" evidence="2">
    <location>
        <begin position="134"/>
        <end position="154"/>
    </location>
</feature>
<feature type="transmembrane region" description="Helical" evidence="2">
    <location>
        <begin position="168"/>
        <end position="188"/>
    </location>
</feature>
<feature type="transmembrane region" description="Helical" evidence="2">
    <location>
        <begin position="215"/>
        <end position="235"/>
    </location>
</feature>
<feature type="transmembrane region" description="Helical" evidence="2">
    <location>
        <begin position="237"/>
        <end position="257"/>
    </location>
</feature>
<feature type="domain" description="Fatty acid hydroxylase" evidence="2">
    <location>
        <begin position="176"/>
        <end position="299"/>
    </location>
</feature>
<feature type="sequence conflict" description="In Ref. 1; BAB33076." evidence="3" ref="1">
    <original>T</original>
    <variation>I</variation>
    <location>
        <position position="301"/>
    </location>
</feature>
<feature type="sequence conflict" description="In Ref. 1; BAB33076." evidence="3" ref="1">
    <original>K</original>
    <variation>R</variation>
    <location>
        <position position="311"/>
    </location>
</feature>
<protein>
    <recommendedName>
        <fullName>Fatty acid hydroxylase domain-containing protein 2</fullName>
    </recommendedName>
</protein>
<gene>
    <name type="primary">FAXDC2</name>
    <name type="ORF">QccE-20373</name>
    <name type="ORF">QflA-14437</name>
</gene>
<name>FXDC2_MACFA</name>
<keyword id="KW-0963">Cytoplasm</keyword>
<keyword id="KW-0472">Membrane</keyword>
<keyword id="KW-1185">Reference proteome</keyword>
<keyword id="KW-0812">Transmembrane</keyword>
<keyword id="KW-1133">Transmembrane helix</keyword>
<comment type="function">
    <text evidence="1">Promotes megakaryocyte differentiation by enhancing ERK phosphorylation and up-regulating RUNX1 expression.</text>
</comment>
<comment type="subcellular location">
    <subcellularLocation>
        <location evidence="1">Cytoplasm</location>
    </subcellularLocation>
    <subcellularLocation>
        <location evidence="2">Membrane</location>
        <topology evidence="2">Multi-pass membrane protein</topology>
    </subcellularLocation>
</comment>
<comment type="similarity">
    <text evidence="3">Belongs to the sterol desaturase family.</text>
</comment>